<keyword id="KW-0012">Acyltransferase</keyword>
<keyword id="KW-0333">Golgi apparatus</keyword>
<keyword id="KW-0449">Lipoprotein</keyword>
<keyword id="KW-0472">Membrane</keyword>
<keyword id="KW-0564">Palmitate</keyword>
<keyword id="KW-1185">Reference proteome</keyword>
<keyword id="KW-0808">Transferase</keyword>
<keyword id="KW-0812">Transmembrane</keyword>
<keyword id="KW-1133">Transmembrane helix</keyword>
<gene>
    <name type="primary">PAT14</name>
    <name type="ordered locus">At3g60800</name>
    <name type="ORF">T4C21_210</name>
</gene>
<proteinExistence type="evidence at transcript level"/>
<sequence length="307" mass="34688">MHRSGTTMAWNVFKFCTALRGLGSIMILLVLGVVGVTYYAVVLTNYGPALSQGGLDSLAALTILILFHFLLAMLLWSYFSVVFTDPGVVPPNWRPSTDEERGESDPLNSLDFVGLQSDSSSSNPRVRFCRKCNQLKPSRCHHCSVCGRCVLKMDHHCVWVVNCVGALNYKYFLLFLFYTFLETTLVTLVLMPHFIAFFSDEEIPGTPGTLATTFLAFVLNLAFALSVMGFLIMHISLVAGNTTTIEAYEKKTTTKWRYDLGKKKNFEQVFGMDKRYWLIPGYTEEDLRRMPELQGLEYPSKPDFDSQ</sequence>
<accession>Q8VYP5</accession>
<accession>Q9LZY3</accession>
<comment type="function">
    <text evidence="1 4">Palmitoyl acyltransferase.</text>
</comment>
<comment type="catalytic activity">
    <reaction>
        <text>L-cysteinyl-[protein] + hexadecanoyl-CoA = S-hexadecanoyl-L-cysteinyl-[protein] + CoA</text>
        <dbReference type="Rhea" id="RHEA:36683"/>
        <dbReference type="Rhea" id="RHEA-COMP:10131"/>
        <dbReference type="Rhea" id="RHEA-COMP:11032"/>
        <dbReference type="ChEBI" id="CHEBI:29950"/>
        <dbReference type="ChEBI" id="CHEBI:57287"/>
        <dbReference type="ChEBI" id="CHEBI:57379"/>
        <dbReference type="ChEBI" id="CHEBI:74151"/>
        <dbReference type="EC" id="2.3.1.225"/>
    </reaction>
</comment>
<comment type="subcellular location">
    <subcellularLocation>
        <location evidence="5">Golgi apparatus</location>
        <location evidence="5">trans-Golgi network membrane</location>
        <topology evidence="5">Multi-pass membrane protein</topology>
    </subcellularLocation>
</comment>
<comment type="domain">
    <text evidence="1">The DHHC domain is required for palmitoyltransferase activity.</text>
</comment>
<comment type="similarity">
    <text evidence="5">Belongs to the DHHC palmitoyltransferase family.</text>
</comment>
<comment type="sequence caution" evidence="5">
    <conflict type="erroneous gene model prediction">
        <sequence resource="EMBL-CDS" id="CAB82684"/>
    </conflict>
</comment>
<name>ZDH14_ARATH</name>
<reference key="1">
    <citation type="journal article" date="2000" name="Nature">
        <title>Sequence and analysis of chromosome 3 of the plant Arabidopsis thaliana.</title>
        <authorList>
            <person name="Salanoubat M."/>
            <person name="Lemcke K."/>
            <person name="Rieger M."/>
            <person name="Ansorge W."/>
            <person name="Unseld M."/>
            <person name="Fartmann B."/>
            <person name="Valle G."/>
            <person name="Bloecker H."/>
            <person name="Perez-Alonso M."/>
            <person name="Obermaier B."/>
            <person name="Delseny M."/>
            <person name="Boutry M."/>
            <person name="Grivell L.A."/>
            <person name="Mache R."/>
            <person name="Puigdomenech P."/>
            <person name="De Simone V."/>
            <person name="Choisne N."/>
            <person name="Artiguenave F."/>
            <person name="Robert C."/>
            <person name="Brottier P."/>
            <person name="Wincker P."/>
            <person name="Cattolico L."/>
            <person name="Weissenbach J."/>
            <person name="Saurin W."/>
            <person name="Quetier F."/>
            <person name="Schaefer M."/>
            <person name="Mueller-Auer S."/>
            <person name="Gabel C."/>
            <person name="Fuchs M."/>
            <person name="Benes V."/>
            <person name="Wurmbach E."/>
            <person name="Drzonek H."/>
            <person name="Erfle H."/>
            <person name="Jordan N."/>
            <person name="Bangert S."/>
            <person name="Wiedelmann R."/>
            <person name="Kranz H."/>
            <person name="Voss H."/>
            <person name="Holland R."/>
            <person name="Brandt P."/>
            <person name="Nyakatura G."/>
            <person name="Vezzi A."/>
            <person name="D'Angelo M."/>
            <person name="Pallavicini A."/>
            <person name="Toppo S."/>
            <person name="Simionati B."/>
            <person name="Conrad A."/>
            <person name="Hornischer K."/>
            <person name="Kauer G."/>
            <person name="Loehnert T.-H."/>
            <person name="Nordsiek G."/>
            <person name="Reichelt J."/>
            <person name="Scharfe M."/>
            <person name="Schoen O."/>
            <person name="Bargues M."/>
            <person name="Terol J."/>
            <person name="Climent J."/>
            <person name="Navarro P."/>
            <person name="Collado C."/>
            <person name="Perez-Perez A."/>
            <person name="Ottenwaelder B."/>
            <person name="Duchemin D."/>
            <person name="Cooke R."/>
            <person name="Laudie M."/>
            <person name="Berger-Llauro C."/>
            <person name="Purnelle B."/>
            <person name="Masuy D."/>
            <person name="de Haan M."/>
            <person name="Maarse A.C."/>
            <person name="Alcaraz J.-P."/>
            <person name="Cottet A."/>
            <person name="Casacuberta E."/>
            <person name="Monfort A."/>
            <person name="Argiriou A."/>
            <person name="Flores M."/>
            <person name="Liguori R."/>
            <person name="Vitale D."/>
            <person name="Mannhaupt G."/>
            <person name="Haase D."/>
            <person name="Schoof H."/>
            <person name="Rudd S."/>
            <person name="Zaccaria P."/>
            <person name="Mewes H.-W."/>
            <person name="Mayer K.F.X."/>
            <person name="Kaul S."/>
            <person name="Town C.D."/>
            <person name="Koo H.L."/>
            <person name="Tallon L.J."/>
            <person name="Jenkins J."/>
            <person name="Rooney T."/>
            <person name="Rizzo M."/>
            <person name="Walts A."/>
            <person name="Utterback T."/>
            <person name="Fujii C.Y."/>
            <person name="Shea T.P."/>
            <person name="Creasy T.H."/>
            <person name="Haas B."/>
            <person name="Maiti R."/>
            <person name="Wu D."/>
            <person name="Peterson J."/>
            <person name="Van Aken S."/>
            <person name="Pai G."/>
            <person name="Militscher J."/>
            <person name="Sellers P."/>
            <person name="Gill J.E."/>
            <person name="Feldblyum T.V."/>
            <person name="Preuss D."/>
            <person name="Lin X."/>
            <person name="Nierman W.C."/>
            <person name="Salzberg S.L."/>
            <person name="White O."/>
            <person name="Venter J.C."/>
            <person name="Fraser C.M."/>
            <person name="Kaneko T."/>
            <person name="Nakamura Y."/>
            <person name="Sato S."/>
            <person name="Kato T."/>
            <person name="Asamizu E."/>
            <person name="Sasamoto S."/>
            <person name="Kimura T."/>
            <person name="Idesawa K."/>
            <person name="Kawashima K."/>
            <person name="Kishida Y."/>
            <person name="Kiyokawa C."/>
            <person name="Kohara M."/>
            <person name="Matsumoto M."/>
            <person name="Matsuno A."/>
            <person name="Muraki A."/>
            <person name="Nakayama S."/>
            <person name="Nakazaki N."/>
            <person name="Shinpo S."/>
            <person name="Takeuchi C."/>
            <person name="Wada T."/>
            <person name="Watanabe A."/>
            <person name="Yamada M."/>
            <person name="Yasuda M."/>
            <person name="Tabata S."/>
        </authorList>
    </citation>
    <scope>NUCLEOTIDE SEQUENCE [LARGE SCALE GENOMIC DNA]</scope>
    <source>
        <strain>cv. Columbia</strain>
    </source>
</reference>
<reference key="2">
    <citation type="journal article" date="2017" name="Plant J.">
        <title>Araport11: a complete reannotation of the Arabidopsis thaliana reference genome.</title>
        <authorList>
            <person name="Cheng C.Y."/>
            <person name="Krishnakumar V."/>
            <person name="Chan A.P."/>
            <person name="Thibaud-Nissen F."/>
            <person name="Schobel S."/>
            <person name="Town C.D."/>
        </authorList>
    </citation>
    <scope>GENOME REANNOTATION</scope>
    <source>
        <strain>cv. Columbia</strain>
    </source>
</reference>
<reference key="3">
    <citation type="journal article" date="2003" name="Science">
        <title>Empirical analysis of transcriptional activity in the Arabidopsis genome.</title>
        <authorList>
            <person name="Yamada K."/>
            <person name="Lim J."/>
            <person name="Dale J.M."/>
            <person name="Chen H."/>
            <person name="Shinn P."/>
            <person name="Palm C.J."/>
            <person name="Southwick A.M."/>
            <person name="Wu H.C."/>
            <person name="Kim C.J."/>
            <person name="Nguyen M."/>
            <person name="Pham P.K."/>
            <person name="Cheuk R.F."/>
            <person name="Karlin-Newmann G."/>
            <person name="Liu S.X."/>
            <person name="Lam B."/>
            <person name="Sakano H."/>
            <person name="Wu T."/>
            <person name="Yu G."/>
            <person name="Miranda M."/>
            <person name="Quach H.L."/>
            <person name="Tripp M."/>
            <person name="Chang C.H."/>
            <person name="Lee J.M."/>
            <person name="Toriumi M.J."/>
            <person name="Chan M.M."/>
            <person name="Tang C.C."/>
            <person name="Onodera C.S."/>
            <person name="Deng J.M."/>
            <person name="Akiyama K."/>
            <person name="Ansari Y."/>
            <person name="Arakawa T."/>
            <person name="Banh J."/>
            <person name="Banno F."/>
            <person name="Bowser L."/>
            <person name="Brooks S.Y."/>
            <person name="Carninci P."/>
            <person name="Chao Q."/>
            <person name="Choy N."/>
            <person name="Enju A."/>
            <person name="Goldsmith A.D."/>
            <person name="Gurjal M."/>
            <person name="Hansen N.F."/>
            <person name="Hayashizaki Y."/>
            <person name="Johnson-Hopson C."/>
            <person name="Hsuan V.W."/>
            <person name="Iida K."/>
            <person name="Karnes M."/>
            <person name="Khan S."/>
            <person name="Koesema E."/>
            <person name="Ishida J."/>
            <person name="Jiang P.X."/>
            <person name="Jones T."/>
            <person name="Kawai J."/>
            <person name="Kamiya A."/>
            <person name="Meyers C."/>
            <person name="Nakajima M."/>
            <person name="Narusaka M."/>
            <person name="Seki M."/>
            <person name="Sakurai T."/>
            <person name="Satou M."/>
            <person name="Tamse R."/>
            <person name="Vaysberg M."/>
            <person name="Wallender E.K."/>
            <person name="Wong C."/>
            <person name="Yamamura Y."/>
            <person name="Yuan S."/>
            <person name="Shinozaki K."/>
            <person name="Davis R.W."/>
            <person name="Theologis A."/>
            <person name="Ecker J.R."/>
        </authorList>
    </citation>
    <scope>NUCLEOTIDE SEQUENCE [LARGE SCALE MRNA]</scope>
    <source>
        <strain>cv. Columbia</strain>
    </source>
</reference>
<reference key="4">
    <citation type="submission" date="2006-07" db="EMBL/GenBank/DDBJ databases">
        <title>Large-scale analysis of RIKEN Arabidopsis full-length (RAFL) cDNAs.</title>
        <authorList>
            <person name="Totoki Y."/>
            <person name="Seki M."/>
            <person name="Ishida J."/>
            <person name="Nakajima M."/>
            <person name="Enju A."/>
            <person name="Kamiya A."/>
            <person name="Narusaka M."/>
            <person name="Shin-i T."/>
            <person name="Nakagawa M."/>
            <person name="Sakamoto N."/>
            <person name="Oishi K."/>
            <person name="Kohara Y."/>
            <person name="Kobayashi M."/>
            <person name="Toyoda A."/>
            <person name="Sakaki Y."/>
            <person name="Sakurai T."/>
            <person name="Iida K."/>
            <person name="Akiyama K."/>
            <person name="Satou M."/>
            <person name="Toyoda T."/>
            <person name="Konagaya A."/>
            <person name="Carninci P."/>
            <person name="Kawai J."/>
            <person name="Hayashizaki Y."/>
            <person name="Shinozaki K."/>
        </authorList>
    </citation>
    <scope>NUCLEOTIDE SEQUENCE [LARGE SCALE MRNA]</scope>
    <source>
        <strain>cv. Columbia</strain>
    </source>
</reference>
<reference key="5">
    <citation type="book" date="2007" name="Proceedings of the 18th international conference on Arabidopsis research">
        <title>S-acylation: dynamic control of plant development and sigalling by lipid modification of proteins.</title>
        <authorList>
            <person name="Hemsley P.A."/>
            <person name="Taylor L."/>
            <person name="Grierson C.S."/>
        </authorList>
    </citation>
    <scope>GENE FAMILY</scope>
    <scope>FUNCTION</scope>
</reference>
<reference key="6">
    <citation type="journal article" date="2012" name="Plant Physiol.">
        <title>Genomics and localization of the Arabidopsis DHHC-cysteine-rich domain S-acyltransferase protein family.</title>
        <authorList>
            <person name="Batistic O."/>
        </authorList>
    </citation>
    <scope>SUBCELLULAR LOCATION</scope>
    <scope>GENE FAMILY</scope>
    <scope>NOMENCLATURE</scope>
</reference>
<evidence type="ECO:0000250" key="1"/>
<evidence type="ECO:0000255" key="2"/>
<evidence type="ECO:0000255" key="3">
    <source>
        <dbReference type="PROSITE-ProRule" id="PRU00067"/>
    </source>
</evidence>
<evidence type="ECO:0000269" key="4">
    <source ref="5"/>
</evidence>
<evidence type="ECO:0000305" key="5"/>
<dbReference type="EC" id="2.3.1.225"/>
<dbReference type="EMBL" id="AL162295">
    <property type="protein sequence ID" value="CAB82684.1"/>
    <property type="status" value="ALT_SEQ"/>
    <property type="molecule type" value="Genomic_DNA"/>
</dbReference>
<dbReference type="EMBL" id="CP002686">
    <property type="protein sequence ID" value="AEE80109.1"/>
    <property type="molecule type" value="Genomic_DNA"/>
</dbReference>
<dbReference type="EMBL" id="AY070381">
    <property type="protein sequence ID" value="AAL49877.1"/>
    <property type="molecule type" value="mRNA"/>
</dbReference>
<dbReference type="EMBL" id="AY096574">
    <property type="protein sequence ID" value="AAM20224.1"/>
    <property type="molecule type" value="mRNA"/>
</dbReference>
<dbReference type="EMBL" id="AK229274">
    <property type="protein sequence ID" value="BAF01138.1"/>
    <property type="molecule type" value="mRNA"/>
</dbReference>
<dbReference type="PIR" id="T47891">
    <property type="entry name" value="T47891"/>
</dbReference>
<dbReference type="RefSeq" id="NP_191639.2">
    <property type="nucleotide sequence ID" value="NM_115944.4"/>
</dbReference>
<dbReference type="SMR" id="Q8VYP5"/>
<dbReference type="BioGRID" id="10565">
    <property type="interactions" value="1"/>
</dbReference>
<dbReference type="FunCoup" id="Q8VYP5">
    <property type="interactions" value="3120"/>
</dbReference>
<dbReference type="IntAct" id="Q8VYP5">
    <property type="interactions" value="1"/>
</dbReference>
<dbReference type="STRING" id="3702.Q8VYP5"/>
<dbReference type="SwissPalm" id="Q8VYP5"/>
<dbReference type="PaxDb" id="3702-AT3G60800.1"/>
<dbReference type="ProteomicsDB" id="232345"/>
<dbReference type="EnsemblPlants" id="AT3G60800.1">
    <property type="protein sequence ID" value="AT3G60800.1"/>
    <property type="gene ID" value="AT3G60800"/>
</dbReference>
<dbReference type="GeneID" id="825251"/>
<dbReference type="Gramene" id="AT3G60800.1">
    <property type="protein sequence ID" value="AT3G60800.1"/>
    <property type="gene ID" value="AT3G60800"/>
</dbReference>
<dbReference type="KEGG" id="ath:AT3G60800"/>
<dbReference type="Araport" id="AT3G60800"/>
<dbReference type="TAIR" id="AT3G60800">
    <property type="gene designation" value="PAT14"/>
</dbReference>
<dbReference type="eggNOG" id="KOG1315">
    <property type="taxonomic scope" value="Eukaryota"/>
</dbReference>
<dbReference type="HOGENOM" id="CLU_027721_2_1_1"/>
<dbReference type="InParanoid" id="Q8VYP5"/>
<dbReference type="OMA" id="NCYSSFP"/>
<dbReference type="OrthoDB" id="331948at2759"/>
<dbReference type="PhylomeDB" id="Q8VYP5"/>
<dbReference type="BRENDA" id="2.3.1.225">
    <property type="organism ID" value="399"/>
</dbReference>
<dbReference type="PRO" id="PR:Q8VYP5"/>
<dbReference type="Proteomes" id="UP000006548">
    <property type="component" value="Chromosome 3"/>
</dbReference>
<dbReference type="ExpressionAtlas" id="Q8VYP5">
    <property type="expression patterns" value="baseline and differential"/>
</dbReference>
<dbReference type="GO" id="GO:0005769">
    <property type="term" value="C:early endosome"/>
    <property type="evidence" value="ECO:0000314"/>
    <property type="project" value="TAIR"/>
</dbReference>
<dbReference type="GO" id="GO:0005794">
    <property type="term" value="C:Golgi apparatus"/>
    <property type="evidence" value="ECO:0000314"/>
    <property type="project" value="TAIR"/>
</dbReference>
<dbReference type="GO" id="GO:0000138">
    <property type="term" value="C:Golgi trans cisterna"/>
    <property type="evidence" value="ECO:0000314"/>
    <property type="project" value="TAIR"/>
</dbReference>
<dbReference type="GO" id="GO:0016020">
    <property type="term" value="C:membrane"/>
    <property type="evidence" value="ECO:0007669"/>
    <property type="project" value="UniProtKB-KW"/>
</dbReference>
<dbReference type="GO" id="GO:0005802">
    <property type="term" value="C:trans-Golgi network"/>
    <property type="evidence" value="ECO:0000314"/>
    <property type="project" value="TAIR"/>
</dbReference>
<dbReference type="GO" id="GO:0019707">
    <property type="term" value="F:protein-cysteine S-acyltransferase activity"/>
    <property type="evidence" value="ECO:0000314"/>
    <property type="project" value="TAIR"/>
</dbReference>
<dbReference type="GO" id="GO:0019706">
    <property type="term" value="F:protein-cysteine S-palmitoyltransferase activity"/>
    <property type="evidence" value="ECO:0007669"/>
    <property type="project" value="UniProtKB-EC"/>
</dbReference>
<dbReference type="GO" id="GO:0010150">
    <property type="term" value="P:leaf senescence"/>
    <property type="evidence" value="ECO:0000315"/>
    <property type="project" value="TAIR"/>
</dbReference>
<dbReference type="GO" id="GO:1900055">
    <property type="term" value="P:regulation of leaf senescence"/>
    <property type="evidence" value="ECO:0000315"/>
    <property type="project" value="TAIR"/>
</dbReference>
<dbReference type="GO" id="GO:2000377">
    <property type="term" value="P:regulation of reactive oxygen species metabolic process"/>
    <property type="evidence" value="ECO:0000316"/>
    <property type="project" value="TAIR"/>
</dbReference>
<dbReference type="InterPro" id="IPR001594">
    <property type="entry name" value="Palmitoyltrfase_DHHC"/>
</dbReference>
<dbReference type="InterPro" id="IPR039859">
    <property type="entry name" value="PFA4/ZDH16/20/ERF2-like"/>
</dbReference>
<dbReference type="PANTHER" id="PTHR12246">
    <property type="entry name" value="PALMITOYLTRANSFERASE ZDHHC16"/>
    <property type="match status" value="1"/>
</dbReference>
<dbReference type="Pfam" id="PF01529">
    <property type="entry name" value="DHHC"/>
    <property type="match status" value="1"/>
</dbReference>
<dbReference type="PROSITE" id="PS50216">
    <property type="entry name" value="DHHC"/>
    <property type="match status" value="1"/>
</dbReference>
<feature type="chain" id="PRO_0000363600" description="Probable protein S-acyltransferase 14">
    <location>
        <begin position="1"/>
        <end position="307"/>
    </location>
</feature>
<feature type="transmembrane region" description="Helical" evidence="2">
    <location>
        <begin position="22"/>
        <end position="42"/>
    </location>
</feature>
<feature type="transmembrane region" description="Helical" evidence="2">
    <location>
        <begin position="63"/>
        <end position="83"/>
    </location>
</feature>
<feature type="transmembrane region" description="Helical" evidence="2">
    <location>
        <begin position="171"/>
        <end position="191"/>
    </location>
</feature>
<feature type="transmembrane region" description="Helical" evidence="2">
    <location>
        <begin position="213"/>
        <end position="233"/>
    </location>
</feature>
<feature type="domain" description="DHHC" evidence="3">
    <location>
        <begin position="127"/>
        <end position="177"/>
    </location>
</feature>
<feature type="active site" description="S-palmitoyl cysteine intermediate" evidence="1">
    <location>
        <position position="157"/>
    </location>
</feature>
<protein>
    <recommendedName>
        <fullName>Probable protein S-acyltransferase 14</fullName>
        <ecNumber>2.3.1.225</ecNumber>
    </recommendedName>
    <alternativeName>
        <fullName>Probable palmitoyltransferase At3g60800</fullName>
    </alternativeName>
    <alternativeName>
        <fullName>Zinc finger DHHC domain-containing protein At3g60800</fullName>
    </alternativeName>
</protein>
<organism>
    <name type="scientific">Arabidopsis thaliana</name>
    <name type="common">Mouse-ear cress</name>
    <dbReference type="NCBI Taxonomy" id="3702"/>
    <lineage>
        <taxon>Eukaryota</taxon>
        <taxon>Viridiplantae</taxon>
        <taxon>Streptophyta</taxon>
        <taxon>Embryophyta</taxon>
        <taxon>Tracheophyta</taxon>
        <taxon>Spermatophyta</taxon>
        <taxon>Magnoliopsida</taxon>
        <taxon>eudicotyledons</taxon>
        <taxon>Gunneridae</taxon>
        <taxon>Pentapetalae</taxon>
        <taxon>rosids</taxon>
        <taxon>malvids</taxon>
        <taxon>Brassicales</taxon>
        <taxon>Brassicaceae</taxon>
        <taxon>Camelineae</taxon>
        <taxon>Arabidopsis</taxon>
    </lineage>
</organism>